<dbReference type="EC" id="2.8.1.-" evidence="1"/>
<dbReference type="EMBL" id="CP001043">
    <property type="protein sequence ID" value="ACC72064.1"/>
    <property type="molecule type" value="Genomic_DNA"/>
</dbReference>
<dbReference type="RefSeq" id="WP_012402243.1">
    <property type="nucleotide sequence ID" value="NC_010622.1"/>
</dbReference>
<dbReference type="SMR" id="B2JIL8"/>
<dbReference type="STRING" id="391038.Bphy_2892"/>
<dbReference type="KEGG" id="bph:Bphy_2892"/>
<dbReference type="eggNOG" id="COG0037">
    <property type="taxonomic scope" value="Bacteria"/>
</dbReference>
<dbReference type="HOGENOM" id="CLU_026481_0_0_4"/>
<dbReference type="OrthoDB" id="9801054at2"/>
<dbReference type="Proteomes" id="UP000001192">
    <property type="component" value="Chromosome 1"/>
</dbReference>
<dbReference type="GO" id="GO:0005737">
    <property type="term" value="C:cytoplasm"/>
    <property type="evidence" value="ECO:0007669"/>
    <property type="project" value="UniProtKB-SubCell"/>
</dbReference>
<dbReference type="GO" id="GO:0051539">
    <property type="term" value="F:4 iron, 4 sulfur cluster binding"/>
    <property type="evidence" value="ECO:0007669"/>
    <property type="project" value="UniProtKB-UniRule"/>
</dbReference>
<dbReference type="GO" id="GO:0005524">
    <property type="term" value="F:ATP binding"/>
    <property type="evidence" value="ECO:0007669"/>
    <property type="project" value="UniProtKB-UniRule"/>
</dbReference>
<dbReference type="GO" id="GO:0000287">
    <property type="term" value="F:magnesium ion binding"/>
    <property type="evidence" value="ECO:0007669"/>
    <property type="project" value="UniProtKB-UniRule"/>
</dbReference>
<dbReference type="GO" id="GO:0016783">
    <property type="term" value="F:sulfurtransferase activity"/>
    <property type="evidence" value="ECO:0007669"/>
    <property type="project" value="UniProtKB-UniRule"/>
</dbReference>
<dbReference type="GO" id="GO:0000049">
    <property type="term" value="F:tRNA binding"/>
    <property type="evidence" value="ECO:0007669"/>
    <property type="project" value="UniProtKB-KW"/>
</dbReference>
<dbReference type="GO" id="GO:0034227">
    <property type="term" value="P:tRNA thio-modification"/>
    <property type="evidence" value="ECO:0007669"/>
    <property type="project" value="UniProtKB-UniRule"/>
</dbReference>
<dbReference type="CDD" id="cd24138">
    <property type="entry name" value="TtcA-like"/>
    <property type="match status" value="1"/>
</dbReference>
<dbReference type="Gene3D" id="3.40.50.620">
    <property type="entry name" value="HUPs"/>
    <property type="match status" value="1"/>
</dbReference>
<dbReference type="HAMAP" id="MF_01850">
    <property type="entry name" value="TtcA"/>
    <property type="match status" value="1"/>
</dbReference>
<dbReference type="InterPro" id="IPR014729">
    <property type="entry name" value="Rossmann-like_a/b/a_fold"/>
</dbReference>
<dbReference type="InterPro" id="IPR011063">
    <property type="entry name" value="TilS/TtcA_N"/>
</dbReference>
<dbReference type="InterPro" id="IPR012089">
    <property type="entry name" value="tRNA_Cyd_32_2_STrfase"/>
</dbReference>
<dbReference type="NCBIfam" id="NF007972">
    <property type="entry name" value="PRK10696.1"/>
    <property type="match status" value="1"/>
</dbReference>
<dbReference type="PANTHER" id="PTHR43686:SF1">
    <property type="entry name" value="AMINOTRAN_5 DOMAIN-CONTAINING PROTEIN"/>
    <property type="match status" value="1"/>
</dbReference>
<dbReference type="PANTHER" id="PTHR43686">
    <property type="entry name" value="SULFURTRANSFERASE-RELATED"/>
    <property type="match status" value="1"/>
</dbReference>
<dbReference type="Pfam" id="PF01171">
    <property type="entry name" value="ATP_bind_3"/>
    <property type="match status" value="1"/>
</dbReference>
<dbReference type="SUPFAM" id="SSF52402">
    <property type="entry name" value="Adenine nucleotide alpha hydrolases-like"/>
    <property type="match status" value="1"/>
</dbReference>
<gene>
    <name evidence="1" type="primary">ttcA</name>
    <name type="ordered locus">Bphy_2892</name>
</gene>
<sequence length="336" mass="37818">MNAPDTLTGLEANAPVTEEAPAASEAERKRAHTRREQKEQYENNKLFKRLARQVGQAIGDFNMIEDGDKVMVCLSGGKDSYAMLDVLMRLRERAPIHFDIVAVNLDQKQPGFPEHVLPEYLSKLDIPYHIENQDTYSIVKRLVPEGKTTCSLCSRLRRGILYRVAGELGATKIALGHHRDDILQTLLLNLFYGGKLKGMPPKLQSDDGKNVVIRPLAYVKETDLEKYAELRQFPIIPCNLCGSQPNLKRAEMKALIREWDKRFPGRVDNMFNALSNVVPSHLMDHKLFPFASLRATGEADPHGDIAFDEEPCSADSASNQTQRPSQTVSFVQFDDI</sequence>
<proteinExistence type="inferred from homology"/>
<organism>
    <name type="scientific">Paraburkholderia phymatum (strain DSM 17167 / CIP 108236 / LMG 21445 / STM815)</name>
    <name type="common">Burkholderia phymatum</name>
    <dbReference type="NCBI Taxonomy" id="391038"/>
    <lineage>
        <taxon>Bacteria</taxon>
        <taxon>Pseudomonadati</taxon>
        <taxon>Pseudomonadota</taxon>
        <taxon>Betaproteobacteria</taxon>
        <taxon>Burkholderiales</taxon>
        <taxon>Burkholderiaceae</taxon>
        <taxon>Paraburkholderia</taxon>
    </lineage>
</organism>
<feature type="chain" id="PRO_0000348689" description="tRNA-cytidine(32) 2-sulfurtransferase">
    <location>
        <begin position="1"/>
        <end position="336"/>
    </location>
</feature>
<feature type="region of interest" description="Disordered" evidence="2">
    <location>
        <begin position="1"/>
        <end position="42"/>
    </location>
</feature>
<feature type="region of interest" description="Disordered" evidence="2">
    <location>
        <begin position="301"/>
        <end position="328"/>
    </location>
</feature>
<feature type="short sequence motif" description="PP-loop motif" evidence="1">
    <location>
        <begin position="75"/>
        <end position="80"/>
    </location>
</feature>
<feature type="compositionally biased region" description="Polar residues" evidence="2">
    <location>
        <begin position="315"/>
        <end position="328"/>
    </location>
</feature>
<feature type="binding site" evidence="1">
    <location>
        <position position="150"/>
    </location>
    <ligand>
        <name>[4Fe-4S] cluster</name>
        <dbReference type="ChEBI" id="CHEBI:49883"/>
    </ligand>
</feature>
<feature type="binding site" evidence="1">
    <location>
        <position position="153"/>
    </location>
    <ligand>
        <name>[4Fe-4S] cluster</name>
        <dbReference type="ChEBI" id="CHEBI:49883"/>
    </ligand>
</feature>
<feature type="binding site" evidence="1">
    <location>
        <position position="241"/>
    </location>
    <ligand>
        <name>[4Fe-4S] cluster</name>
        <dbReference type="ChEBI" id="CHEBI:49883"/>
    </ligand>
</feature>
<name>TTCA_PARP8</name>
<evidence type="ECO:0000255" key="1">
    <source>
        <dbReference type="HAMAP-Rule" id="MF_01850"/>
    </source>
</evidence>
<evidence type="ECO:0000256" key="2">
    <source>
        <dbReference type="SAM" id="MobiDB-lite"/>
    </source>
</evidence>
<reference key="1">
    <citation type="journal article" date="2014" name="Stand. Genomic Sci.">
        <title>Complete genome sequence of Burkholderia phymatum STM815(T), a broad host range and efficient nitrogen-fixing symbiont of Mimosa species.</title>
        <authorList>
            <person name="Moulin L."/>
            <person name="Klonowska A."/>
            <person name="Caroline B."/>
            <person name="Booth K."/>
            <person name="Vriezen J.A."/>
            <person name="Melkonian R."/>
            <person name="James E.K."/>
            <person name="Young J.P."/>
            <person name="Bena G."/>
            <person name="Hauser L."/>
            <person name="Land M."/>
            <person name="Kyrpides N."/>
            <person name="Bruce D."/>
            <person name="Chain P."/>
            <person name="Copeland A."/>
            <person name="Pitluck S."/>
            <person name="Woyke T."/>
            <person name="Lizotte-Waniewski M."/>
            <person name="Bristow J."/>
            <person name="Riley M."/>
        </authorList>
    </citation>
    <scope>NUCLEOTIDE SEQUENCE [LARGE SCALE GENOMIC DNA]</scope>
    <source>
        <strain>DSM 17167 / CIP 108236 / LMG 21445 / STM815</strain>
    </source>
</reference>
<comment type="function">
    <text evidence="1">Catalyzes the ATP-dependent 2-thiolation of cytidine in position 32 of tRNA, to form 2-thiocytidine (s(2)C32). The sulfur atoms are provided by the cysteine/cysteine desulfurase (IscS) system.</text>
</comment>
<comment type="catalytic activity">
    <reaction evidence="1">
        <text>cytidine(32) in tRNA + S-sulfanyl-L-cysteinyl-[cysteine desulfurase] + AH2 + ATP = 2-thiocytidine(32) in tRNA + L-cysteinyl-[cysteine desulfurase] + A + AMP + diphosphate + H(+)</text>
        <dbReference type="Rhea" id="RHEA:57048"/>
        <dbReference type="Rhea" id="RHEA-COMP:10288"/>
        <dbReference type="Rhea" id="RHEA-COMP:12157"/>
        <dbReference type="Rhea" id="RHEA-COMP:12158"/>
        <dbReference type="Rhea" id="RHEA-COMP:14821"/>
        <dbReference type="ChEBI" id="CHEBI:13193"/>
        <dbReference type="ChEBI" id="CHEBI:15378"/>
        <dbReference type="ChEBI" id="CHEBI:17499"/>
        <dbReference type="ChEBI" id="CHEBI:29950"/>
        <dbReference type="ChEBI" id="CHEBI:30616"/>
        <dbReference type="ChEBI" id="CHEBI:33019"/>
        <dbReference type="ChEBI" id="CHEBI:61963"/>
        <dbReference type="ChEBI" id="CHEBI:82748"/>
        <dbReference type="ChEBI" id="CHEBI:141453"/>
        <dbReference type="ChEBI" id="CHEBI:456215"/>
    </reaction>
    <physiologicalReaction direction="left-to-right" evidence="1">
        <dbReference type="Rhea" id="RHEA:57049"/>
    </physiologicalReaction>
</comment>
<comment type="cofactor">
    <cofactor evidence="1">
        <name>Mg(2+)</name>
        <dbReference type="ChEBI" id="CHEBI:18420"/>
    </cofactor>
</comment>
<comment type="cofactor">
    <cofactor evidence="1">
        <name>[4Fe-4S] cluster</name>
        <dbReference type="ChEBI" id="CHEBI:49883"/>
    </cofactor>
    <text evidence="1">Binds 1 [4Fe-4S] cluster per subunit. The cluster is chelated by three Cys residues, the fourth Fe has a free coordination site that may bind a sulfur atom transferred from the persulfide of IscS.</text>
</comment>
<comment type="pathway">
    <text evidence="1">tRNA modification.</text>
</comment>
<comment type="subunit">
    <text evidence="1">Homodimer.</text>
</comment>
<comment type="subcellular location">
    <subcellularLocation>
        <location evidence="1">Cytoplasm</location>
    </subcellularLocation>
</comment>
<comment type="miscellaneous">
    <text evidence="1">The thiolation reaction likely consists of two steps: a first activation step by ATP to form an adenylated intermediate of the target base of tRNA, and a second nucleophilic substitution step of the sulfur (S) atom supplied by the hydrosulfide attached to the Fe-S cluster.</text>
</comment>
<comment type="similarity">
    <text evidence="1">Belongs to the TtcA family.</text>
</comment>
<protein>
    <recommendedName>
        <fullName evidence="1">tRNA-cytidine(32) 2-sulfurtransferase</fullName>
        <ecNumber evidence="1">2.8.1.-</ecNumber>
    </recommendedName>
    <alternativeName>
        <fullName evidence="1">Two-thiocytidine biosynthesis protein A</fullName>
    </alternativeName>
    <alternativeName>
        <fullName evidence="1">tRNA 2-thiocytidine biosynthesis protein TtcA</fullName>
    </alternativeName>
</protein>
<accession>B2JIL8</accession>
<keyword id="KW-0004">4Fe-4S</keyword>
<keyword id="KW-0067">ATP-binding</keyword>
<keyword id="KW-0963">Cytoplasm</keyword>
<keyword id="KW-0408">Iron</keyword>
<keyword id="KW-0411">Iron-sulfur</keyword>
<keyword id="KW-0460">Magnesium</keyword>
<keyword id="KW-0479">Metal-binding</keyword>
<keyword id="KW-0547">Nucleotide-binding</keyword>
<keyword id="KW-1185">Reference proteome</keyword>
<keyword id="KW-0694">RNA-binding</keyword>
<keyword id="KW-0808">Transferase</keyword>
<keyword id="KW-0819">tRNA processing</keyword>
<keyword id="KW-0820">tRNA-binding</keyword>